<reference key="1">
    <citation type="journal article" date="2004" name="Biochimie">
        <title>Biochemical, genetic and physiological characterization of venom components from two species of scorpions: Centruroides exilicauda Wood and Centruroides sculpturatus Ewing.</title>
        <authorList>
            <person name="Valdez-Cruz N.A."/>
            <person name="Davila S."/>
            <person name="Licea A."/>
            <person name="Corona M."/>
            <person name="Zamudio F.Z."/>
            <person name="Garcia-Valdes J."/>
            <person name="Boyer L."/>
            <person name="Possani L.D."/>
        </authorList>
    </citation>
    <scope>NUCLEOTIDE SEQUENCE [MRNA]</scope>
    <source>
        <tissue>Venom gland</tissue>
    </source>
</reference>
<organism>
    <name type="scientific">Centruroides exilicauda</name>
    <name type="common">Bark scorpion</name>
    <name type="synonym">Buthus exilicauda</name>
    <dbReference type="NCBI Taxonomy" id="6879"/>
    <lineage>
        <taxon>Eukaryota</taxon>
        <taxon>Metazoa</taxon>
        <taxon>Ecdysozoa</taxon>
        <taxon>Arthropoda</taxon>
        <taxon>Chelicerata</taxon>
        <taxon>Arachnida</taxon>
        <taxon>Scorpiones</taxon>
        <taxon>Buthida</taxon>
        <taxon>Buthoidea</taxon>
        <taxon>Buthidae</taxon>
        <taxon>Centruroides</taxon>
    </lineage>
</organism>
<protein>
    <recommendedName>
        <fullName>Neurotoxin Cex9</fullName>
    </recommendedName>
</protein>
<keyword id="KW-0027">Amidation</keyword>
<keyword id="KW-1015">Disulfide bond</keyword>
<keyword id="KW-0872">Ion channel impairing toxin</keyword>
<keyword id="KW-0528">Neurotoxin</keyword>
<keyword id="KW-0964">Secreted</keyword>
<keyword id="KW-0800">Toxin</keyword>
<keyword id="KW-0738">Voltage-gated sodium channel impairing toxin</keyword>
<dbReference type="EMBL" id="AY649867">
    <property type="protein sequence ID" value="AAT98000.1"/>
    <property type="molecule type" value="mRNA"/>
</dbReference>
<dbReference type="SMR" id="Q68PG6"/>
<dbReference type="GO" id="GO:0005576">
    <property type="term" value="C:extracellular region"/>
    <property type="evidence" value="ECO:0007669"/>
    <property type="project" value="UniProtKB-SubCell"/>
</dbReference>
<dbReference type="GO" id="GO:0019871">
    <property type="term" value="F:sodium channel inhibitor activity"/>
    <property type="evidence" value="ECO:0007669"/>
    <property type="project" value="InterPro"/>
</dbReference>
<dbReference type="GO" id="GO:0090729">
    <property type="term" value="F:toxin activity"/>
    <property type="evidence" value="ECO:0007669"/>
    <property type="project" value="UniProtKB-KW"/>
</dbReference>
<dbReference type="GO" id="GO:0006952">
    <property type="term" value="P:defense response"/>
    <property type="evidence" value="ECO:0007669"/>
    <property type="project" value="InterPro"/>
</dbReference>
<dbReference type="CDD" id="cd23106">
    <property type="entry name" value="neurotoxins_LC_scorpion"/>
    <property type="match status" value="1"/>
</dbReference>
<dbReference type="FunFam" id="3.30.30.10:FF:000002">
    <property type="entry name" value="Alpha-like toxin BmK-M1"/>
    <property type="match status" value="1"/>
</dbReference>
<dbReference type="Gene3D" id="3.30.30.10">
    <property type="entry name" value="Knottin, scorpion toxin-like"/>
    <property type="match status" value="1"/>
</dbReference>
<dbReference type="InterPro" id="IPR044062">
    <property type="entry name" value="LCN-type_CS_alpha_beta_dom"/>
</dbReference>
<dbReference type="InterPro" id="IPR003614">
    <property type="entry name" value="Scorpion_toxin-like"/>
</dbReference>
<dbReference type="InterPro" id="IPR036574">
    <property type="entry name" value="Scorpion_toxin-like_sf"/>
</dbReference>
<dbReference type="InterPro" id="IPR018218">
    <property type="entry name" value="Scorpion_toxinL"/>
</dbReference>
<dbReference type="InterPro" id="IPR002061">
    <property type="entry name" value="Scorpion_toxinL/defensin"/>
</dbReference>
<dbReference type="Pfam" id="PF00537">
    <property type="entry name" value="Toxin_3"/>
    <property type="match status" value="1"/>
</dbReference>
<dbReference type="PRINTS" id="PR00285">
    <property type="entry name" value="SCORPNTOXIN"/>
</dbReference>
<dbReference type="SMART" id="SM00505">
    <property type="entry name" value="Knot1"/>
    <property type="match status" value="1"/>
</dbReference>
<dbReference type="SUPFAM" id="SSF57095">
    <property type="entry name" value="Scorpion toxin-like"/>
    <property type="match status" value="1"/>
</dbReference>
<dbReference type="PROSITE" id="PS51863">
    <property type="entry name" value="LCN_CSAB"/>
    <property type="match status" value="1"/>
</dbReference>
<feature type="chain" id="PRO_0000254078" description="Neurotoxin Cex9">
    <location>
        <begin position="1"/>
        <end position="64"/>
    </location>
</feature>
<feature type="propeptide" id="PRO_0000254079">
    <location>
        <begin position="65"/>
        <end position="67"/>
    </location>
</feature>
<feature type="domain" description="LCN-type CS-alpha/beta" evidence="3">
    <location>
        <begin position="1"/>
        <end position="65"/>
    </location>
</feature>
<feature type="modified residue" description="Cysteine amide" evidence="2">
    <location>
        <position position="64"/>
    </location>
</feature>
<feature type="disulfide bond" evidence="3">
    <location>
        <begin position="11"/>
        <end position="64"/>
    </location>
</feature>
<feature type="disulfide bond" evidence="3">
    <location>
        <begin position="15"/>
        <end position="40"/>
    </location>
</feature>
<feature type="disulfide bond" evidence="3">
    <location>
        <begin position="24"/>
        <end position="45"/>
    </location>
</feature>
<feature type="disulfide bond" evidence="3">
    <location>
        <begin position="28"/>
        <end position="47"/>
    </location>
</feature>
<proteinExistence type="evidence at transcript level"/>
<accession>Q68PG6</accession>
<evidence type="ECO:0000250" key="1"/>
<evidence type="ECO:0000255" key="2"/>
<evidence type="ECO:0000255" key="3">
    <source>
        <dbReference type="PROSITE-ProRule" id="PRU01210"/>
    </source>
</evidence>
<evidence type="ECO:0000305" key="4"/>
<sequence>KDGYPVEVTGCKKSCYKLGENKFCNRECKMKHRGGSYGYCYFFGCYCEGLAESTPTWPLPNKSCGKK</sequence>
<name>SCX9_CENEX</name>
<comment type="function">
    <text evidence="1">Beta toxins bind voltage-independently at site-4 of sodium channels (Nav) and shift the voltage of activation toward more negative potentials thereby affecting sodium channel activation and promoting spontaneous and repetitive firing.</text>
</comment>
<comment type="subcellular location">
    <subcellularLocation>
        <location evidence="1">Secreted</location>
    </subcellularLocation>
</comment>
<comment type="tissue specificity">
    <text>Expressed by the venom gland.</text>
</comment>
<comment type="domain">
    <text evidence="4">Has the structural arrangement of an alpha-helix connected to antiparallel beta-sheets by disulfide bonds (CS-alpha/beta).</text>
</comment>
<comment type="similarity">
    <text evidence="4">Belongs to the long (4 C-C) scorpion toxin superfamily. Sodium channel inhibitor family. Beta subfamily.</text>
</comment>